<accession>O51940</accession>
<name>PVDA_BURCE</name>
<gene>
    <name evidence="4" type="primary">pvdA</name>
</gene>
<evidence type="ECO:0000250" key="1">
    <source>
        <dbReference type="UniProtKB" id="Q51548"/>
    </source>
</evidence>
<evidence type="ECO:0000256" key="2">
    <source>
        <dbReference type="SAM" id="MobiDB-lite"/>
    </source>
</evidence>
<evidence type="ECO:0000269" key="3">
    <source>
    </source>
</evidence>
<evidence type="ECO:0000303" key="4">
    <source>
    </source>
</evidence>
<evidence type="ECO:0000305" key="5"/>
<keyword id="KW-0274">FAD</keyword>
<keyword id="KW-0285">Flavoprotein</keyword>
<keyword id="KW-0503">Monooxygenase</keyword>
<keyword id="KW-0521">NADP</keyword>
<keyword id="KW-0560">Oxidoreductase</keyword>
<proteinExistence type="inferred from homology"/>
<sequence length="444" mass="50011">MQRETVFDLIGVGFGPSNLALAVRLAERSGAHTLAHCFVERQPAFGWHRGMLLDDCRMQISFLKDLVTMRDPKSRYTFINYLFERGRLNEFVNLKNFYPTRVEFHDYLSWVADAFDDRVHYSETVLGIEPVRGDGARIDALRVLSRDAAGHERQRVTRALSVGVGGTPAIPDAFAALGRDRVIHSSSYLTDIDRLVASPDGERRRVAVIGAGQSAAEVFIDLARRFPHVDANLVMRAGALKPADDSPFVNEIFSPEFTDVVYAQPQDARRALLERYRDTNYAVVDRPLIEQIYEMLYLQRIDGTPRHALLANSAIEAAVRTADGRIELTLRDRMSGATRIERFDALVLATGYRRDTHSALLEGLAPHLGDALTRGDVTRDYLLATPEHFAPRIYLQGCCEDSHGRPTRCCRSWRAVRTKSARRSKTGSRPRTMKAWPGPRTKND</sequence>
<comment type="function">
    <text evidence="3">Catalyzes the conversion of L-ornithine to N(5)-hydroxyornithine, the first step in the biosynthesis of all hydroxamate-containing siderophores, such as ornibactin.</text>
</comment>
<comment type="catalytic activity">
    <reaction evidence="1">
        <text>L-ornithine + NADPH + O2 = N(5)-hydroxy-L-ornithine + NADP(+) + H2O</text>
        <dbReference type="Rhea" id="RHEA:41508"/>
        <dbReference type="ChEBI" id="CHEBI:15377"/>
        <dbReference type="ChEBI" id="CHEBI:15379"/>
        <dbReference type="ChEBI" id="CHEBI:46911"/>
        <dbReference type="ChEBI" id="CHEBI:57783"/>
        <dbReference type="ChEBI" id="CHEBI:58349"/>
        <dbReference type="ChEBI" id="CHEBI:78275"/>
        <dbReference type="EC" id="1.14.13.195"/>
    </reaction>
</comment>
<comment type="cofactor">
    <cofactor evidence="1">
        <name>FAD</name>
        <dbReference type="ChEBI" id="CHEBI:57692"/>
    </cofactor>
    <text evidence="1">Binds 1 FAD per subunit.</text>
</comment>
<comment type="pathway">
    <text evidence="3">Siderophore biosynthesis; ornibactin biosynthesis.</text>
</comment>
<comment type="disruption phenotype">
    <text evidence="3">Less virulent than wild-type in chronic and acute models of respiratory infection.</text>
</comment>
<comment type="similarity">
    <text evidence="5">Belongs to the lysine N(6)-hydroxylase/L-ornithine N(5)-oxygenase family.</text>
</comment>
<protein>
    <recommendedName>
        <fullName evidence="1">L-ornithine N(5)-monooxygenase</fullName>
        <ecNumber evidence="1">1.14.13.195</ecNumber>
    </recommendedName>
    <alternativeName>
        <fullName evidence="1">L-ornithine N(5)-hydroxylase</fullName>
        <shortName evidence="1">Ornithine hydroxylase</shortName>
    </alternativeName>
    <alternativeName>
        <fullName evidence="4">L-ornithine N(5)-oxygenase</fullName>
    </alternativeName>
</protein>
<organism>
    <name type="scientific">Burkholderia cepacia</name>
    <name type="common">Pseudomonas cepacia</name>
    <dbReference type="NCBI Taxonomy" id="292"/>
    <lineage>
        <taxon>Bacteria</taxon>
        <taxon>Pseudomonadati</taxon>
        <taxon>Pseudomonadota</taxon>
        <taxon>Betaproteobacteria</taxon>
        <taxon>Burkholderiales</taxon>
        <taxon>Burkholderiaceae</taxon>
        <taxon>Burkholderia</taxon>
        <taxon>Burkholderia cepacia complex</taxon>
    </lineage>
</organism>
<feature type="chain" id="PRO_0000204030" description="L-ornithine N(5)-monooxygenase">
    <location>
        <begin position="1"/>
        <end position="444"/>
    </location>
</feature>
<feature type="region of interest" description="Disordered" evidence="2">
    <location>
        <begin position="420"/>
        <end position="444"/>
    </location>
</feature>
<feature type="compositionally biased region" description="Basic residues" evidence="2">
    <location>
        <begin position="420"/>
        <end position="432"/>
    </location>
</feature>
<feature type="binding site" evidence="1">
    <location>
        <begin position="40"/>
        <end position="48"/>
    </location>
    <ligand>
        <name>FAD</name>
        <dbReference type="ChEBI" id="CHEBI:57692"/>
    </ligand>
</feature>
<feature type="binding site" evidence="1">
    <location>
        <position position="59"/>
    </location>
    <ligand>
        <name>FAD</name>
        <dbReference type="ChEBI" id="CHEBI:57692"/>
    </ligand>
</feature>
<feature type="binding site" evidence="1">
    <location>
        <position position="64"/>
    </location>
    <ligand>
        <name>substrate</name>
    </ligand>
</feature>
<feature type="binding site" evidence="1">
    <location>
        <position position="125"/>
    </location>
    <ligand>
        <name>FAD</name>
        <dbReference type="ChEBI" id="CHEBI:57692"/>
    </ligand>
</feature>
<feature type="binding site" evidence="1">
    <location>
        <begin position="211"/>
        <end position="214"/>
    </location>
    <ligand>
        <name>NADP(+)</name>
        <dbReference type="ChEBI" id="CHEBI:58349"/>
    </ligand>
</feature>
<feature type="binding site" evidence="1">
    <location>
        <position position="236"/>
    </location>
    <ligand>
        <name>NADP(+)</name>
        <dbReference type="ChEBI" id="CHEBI:58349"/>
    </ligand>
</feature>
<feature type="binding site" evidence="1">
    <location>
        <begin position="250"/>
        <end position="253"/>
    </location>
    <ligand>
        <name>substrate</name>
    </ligand>
</feature>
<feature type="binding site" evidence="1">
    <location>
        <begin position="280"/>
        <end position="282"/>
    </location>
    <ligand>
        <name>NADP(+)</name>
        <dbReference type="ChEBI" id="CHEBI:58349"/>
    </ligand>
</feature>
<feature type="binding site" evidence="1">
    <location>
        <position position="280"/>
    </location>
    <ligand>
        <name>substrate</name>
    </ligand>
</feature>
<feature type="binding site" evidence="1">
    <location>
        <begin position="408"/>
        <end position="410"/>
    </location>
    <ligand>
        <name>FAD</name>
        <dbReference type="ChEBI" id="CHEBI:57692"/>
    </ligand>
</feature>
<dbReference type="EC" id="1.14.13.195" evidence="1"/>
<dbReference type="EMBL" id="AF013993">
    <property type="protein sequence ID" value="AAB94515.1"/>
    <property type="molecule type" value="Genomic_DNA"/>
</dbReference>
<dbReference type="SMR" id="O51940"/>
<dbReference type="STRING" id="292.WI67_08190"/>
<dbReference type="eggNOG" id="COG3486">
    <property type="taxonomic scope" value="Bacteria"/>
</dbReference>
<dbReference type="UniPathway" id="UPA00018"/>
<dbReference type="GO" id="GO:0031172">
    <property type="term" value="F:ornithine N5-monooxygenase activity"/>
    <property type="evidence" value="ECO:0007669"/>
    <property type="project" value="RHEA"/>
</dbReference>
<dbReference type="GO" id="GO:0009058">
    <property type="term" value="P:biosynthetic process"/>
    <property type="evidence" value="ECO:0007669"/>
    <property type="project" value="UniProtKB-ARBA"/>
</dbReference>
<dbReference type="GO" id="GO:0006879">
    <property type="term" value="P:intracellular iron ion homeostasis"/>
    <property type="evidence" value="ECO:0007669"/>
    <property type="project" value="TreeGrafter"/>
</dbReference>
<dbReference type="Gene3D" id="3.50.50.60">
    <property type="entry name" value="FAD/NAD(P)-binding domain"/>
    <property type="match status" value="1"/>
</dbReference>
<dbReference type="InterPro" id="IPR036188">
    <property type="entry name" value="FAD/NAD-bd_sf"/>
</dbReference>
<dbReference type="InterPro" id="IPR025700">
    <property type="entry name" value="Lys/Orn_oxygenase"/>
</dbReference>
<dbReference type="PANTHER" id="PTHR42802:SF1">
    <property type="entry name" value="L-ORNITHINE N(5)-MONOOXYGENASE"/>
    <property type="match status" value="1"/>
</dbReference>
<dbReference type="PANTHER" id="PTHR42802">
    <property type="entry name" value="MONOOXYGENASE"/>
    <property type="match status" value="1"/>
</dbReference>
<dbReference type="Pfam" id="PF13434">
    <property type="entry name" value="Lys_Orn_oxgnase"/>
    <property type="match status" value="1"/>
</dbReference>
<dbReference type="SUPFAM" id="SSF51905">
    <property type="entry name" value="FAD/NAD(P)-binding domain"/>
    <property type="match status" value="2"/>
</dbReference>
<reference key="1">
    <citation type="journal article" date="1999" name="Infect. Immun.">
        <title>Role of ornibactin biosynthesis in the virulence of Burkholderia cepacia: characterization of pvdA, the gene encoding L-ornithine N(5)-oxygenase.</title>
        <authorList>
            <person name="Sokol P.A."/>
            <person name="Darling P."/>
            <person name="Woods D.E."/>
            <person name="Mahenthiralingam E."/>
            <person name="Kooi C."/>
        </authorList>
    </citation>
    <scope>NUCLEOTIDE SEQUENCE [GENOMIC DNA]</scope>
    <scope>FUNCTION</scope>
    <scope>PATHWAY</scope>
    <scope>DISRUPTION PHENOTYPE</scope>
    <source>
        <strain>K56-2</strain>
    </source>
</reference>